<keyword id="KW-0012">Acyltransferase</keyword>
<keyword id="KW-0119">Carbohydrate metabolism</keyword>
<keyword id="KW-0963">Cytoplasm</keyword>
<keyword id="KW-0313">Glucose metabolism</keyword>
<keyword id="KW-0556">Organic radical</keyword>
<keyword id="KW-1185">Reference proteome</keyword>
<keyword id="KW-0808">Transferase</keyword>
<feature type="chain" id="PRO_0000271728" description="Formate acetyltransferase">
    <location>
        <begin position="1"/>
        <end position="748"/>
    </location>
</feature>
<feature type="domain" description="PFL" evidence="4">
    <location>
        <begin position="5"/>
        <end position="618"/>
    </location>
</feature>
<feature type="domain" description="Glycine radical" evidence="3">
    <location>
        <begin position="625"/>
        <end position="748"/>
    </location>
</feature>
<feature type="active site" description="S-acetylcysteine intermediate" evidence="1">
    <location>
        <position position="412"/>
    </location>
</feature>
<feature type="active site" description="Cysteine radical intermediate" evidence="1">
    <location>
        <position position="413"/>
    </location>
</feature>
<feature type="modified residue" description="Glycine radical" evidence="3">
    <location>
        <position position="723"/>
    </location>
</feature>
<sequence>MLETNNHTNAWQGFKTGRWNKNIDVREFIQLNYSLYEGDDEFLEGPTKATETLWDQVMQLSKEERERGGMWDMDTKVASTITSHDAGYLDKDLEKVVGVQTEKPFKRSMQPFGGIRMAKAACEAYGYELDPETEKIFTEYRKTHNQGVFDAYSREMLNCRKAGIITGLPDAYGRGRIIGDYRRVALYGVDFLMEQKLKDFNTMSTEMSEDVIRLREELSEQYRSLQDLKELGQKYGFDISRPATNFKEAVQWLYLAYLAAIKEQNGAAMSLGRTSTFLDIYAERDLQNGDITEQEVQEIIDHFIMKLRIVKFARTPEYNELFSGDPTWVTESIGGVGIDGRPMVTKNSFRFLHSLDNLGPAPEPNLTVLWSTRLPENFKIYCAKMSIKTSSIQYENDDLMRESYGDDYGIACCVSAMKIGKQMQFFGARANLAKALLYAINGGKDEKSGKQVGPSYEGIKSDVLDYDEVFERYEKMMDWLAGVYINSLNIIHYMHDKYSYERLEMALHDTEIIRTMATGIAGLSVAADSLSAIKYAQVKPIRNEEGLVTDFEIEGDFPKYGNNDSRVDEIAVDLVERFMTKLRSHKTYRNSEHTMSVLTITSNVVYGKKTGNTPDGRKAGEPFAPGANPMHGRDQKGALSSLSSVAKIPYDCCKDGISNTFSIVPKSLGKEEVDQNKNLTSMLDGYAMQHGHHLNINVFNRETLIDAMEHPEEYPQLTIRVSGYAVNFIKLTREQQLDVISRTFHESM</sequence>
<dbReference type="EC" id="2.3.1.54" evidence="1"/>
<dbReference type="EMBL" id="CP000029">
    <property type="protein sequence ID" value="AAW53179.1"/>
    <property type="molecule type" value="Genomic_DNA"/>
</dbReference>
<dbReference type="RefSeq" id="WP_002500535.1">
    <property type="nucleotide sequence ID" value="NC_002976.3"/>
</dbReference>
<dbReference type="SMR" id="Q5HKH9"/>
<dbReference type="STRING" id="176279.SERP2366"/>
<dbReference type="KEGG" id="ser:SERP2366"/>
<dbReference type="eggNOG" id="COG1882">
    <property type="taxonomic scope" value="Bacteria"/>
</dbReference>
<dbReference type="HOGENOM" id="CLU_023898_0_0_9"/>
<dbReference type="UniPathway" id="UPA00920">
    <property type="reaction ID" value="UER00891"/>
</dbReference>
<dbReference type="Proteomes" id="UP000000531">
    <property type="component" value="Chromosome"/>
</dbReference>
<dbReference type="GO" id="GO:0005829">
    <property type="term" value="C:cytosol"/>
    <property type="evidence" value="ECO:0007669"/>
    <property type="project" value="TreeGrafter"/>
</dbReference>
<dbReference type="GO" id="GO:0008861">
    <property type="term" value="F:formate C-acetyltransferase activity"/>
    <property type="evidence" value="ECO:0007669"/>
    <property type="project" value="UniProtKB-EC"/>
</dbReference>
<dbReference type="GO" id="GO:0006006">
    <property type="term" value="P:glucose metabolic process"/>
    <property type="evidence" value="ECO:0007669"/>
    <property type="project" value="UniProtKB-KW"/>
</dbReference>
<dbReference type="CDD" id="cd01678">
    <property type="entry name" value="PFL1"/>
    <property type="match status" value="1"/>
</dbReference>
<dbReference type="FunFam" id="3.20.70.20:FF:000003">
    <property type="entry name" value="Formate acetyltransferase"/>
    <property type="match status" value="1"/>
</dbReference>
<dbReference type="Gene3D" id="3.20.70.20">
    <property type="match status" value="1"/>
</dbReference>
<dbReference type="InterPro" id="IPR050244">
    <property type="entry name" value="Auton_GlycylRad_Cofactor"/>
</dbReference>
<dbReference type="InterPro" id="IPR005949">
    <property type="entry name" value="Form_AcTrfase"/>
</dbReference>
<dbReference type="InterPro" id="IPR019777">
    <property type="entry name" value="Form_AcTrfase_GR_CS"/>
</dbReference>
<dbReference type="InterPro" id="IPR001150">
    <property type="entry name" value="Gly_radical"/>
</dbReference>
<dbReference type="InterPro" id="IPR004184">
    <property type="entry name" value="PFL_dom"/>
</dbReference>
<dbReference type="NCBIfam" id="TIGR01255">
    <property type="entry name" value="pyr_form_ly_1"/>
    <property type="match status" value="1"/>
</dbReference>
<dbReference type="PANTHER" id="PTHR30191">
    <property type="entry name" value="FORMATE ACETYLTRANSFERASE"/>
    <property type="match status" value="1"/>
</dbReference>
<dbReference type="PANTHER" id="PTHR30191:SF0">
    <property type="entry name" value="FORMATE ACETYLTRANSFERASE 1"/>
    <property type="match status" value="1"/>
</dbReference>
<dbReference type="Pfam" id="PF01228">
    <property type="entry name" value="Gly_radical"/>
    <property type="match status" value="1"/>
</dbReference>
<dbReference type="Pfam" id="PF02901">
    <property type="entry name" value="PFL-like"/>
    <property type="match status" value="1"/>
</dbReference>
<dbReference type="PIRSF" id="PIRSF000379">
    <property type="entry name" value="For_Ac_trans_1"/>
    <property type="match status" value="1"/>
</dbReference>
<dbReference type="SUPFAM" id="SSF51998">
    <property type="entry name" value="PFL-like glycyl radical enzymes"/>
    <property type="match status" value="1"/>
</dbReference>
<dbReference type="PROSITE" id="PS00850">
    <property type="entry name" value="GLY_RADICAL_1"/>
    <property type="match status" value="1"/>
</dbReference>
<dbReference type="PROSITE" id="PS51149">
    <property type="entry name" value="GLY_RADICAL_2"/>
    <property type="match status" value="1"/>
</dbReference>
<dbReference type="PROSITE" id="PS51554">
    <property type="entry name" value="PFL"/>
    <property type="match status" value="1"/>
</dbReference>
<protein>
    <recommendedName>
        <fullName>Formate acetyltransferase</fullName>
        <ecNumber evidence="1">2.3.1.54</ecNumber>
    </recommendedName>
    <alternativeName>
        <fullName>Pyruvate formate-lyase</fullName>
    </alternativeName>
</protein>
<accession>Q5HKH9</accession>
<proteinExistence type="inferred from homology"/>
<gene>
    <name type="primary">pflB</name>
    <name type="ordered locus">SERP2366</name>
</gene>
<organism>
    <name type="scientific">Staphylococcus epidermidis (strain ATCC 35984 / DSM 28319 / BCRC 17069 / CCUG 31568 / BM 3577 / RP62A)</name>
    <dbReference type="NCBI Taxonomy" id="176279"/>
    <lineage>
        <taxon>Bacteria</taxon>
        <taxon>Bacillati</taxon>
        <taxon>Bacillota</taxon>
        <taxon>Bacilli</taxon>
        <taxon>Bacillales</taxon>
        <taxon>Staphylococcaceae</taxon>
        <taxon>Staphylococcus</taxon>
    </lineage>
</organism>
<comment type="function">
    <text evidence="1">Catalyzes the conversion of pyruvate to formate and acetyl-CoA.</text>
</comment>
<comment type="catalytic activity">
    <reaction evidence="1">
        <text>formate + acetyl-CoA = pyruvate + CoA</text>
        <dbReference type="Rhea" id="RHEA:11844"/>
        <dbReference type="ChEBI" id="CHEBI:15361"/>
        <dbReference type="ChEBI" id="CHEBI:15740"/>
        <dbReference type="ChEBI" id="CHEBI:57287"/>
        <dbReference type="ChEBI" id="CHEBI:57288"/>
        <dbReference type="EC" id="2.3.1.54"/>
    </reaction>
</comment>
<comment type="pathway">
    <text>Fermentation; pyruvate fermentation; formate from pyruvate: step 1/1.</text>
</comment>
<comment type="subunit">
    <text evidence="1">Homodimer.</text>
</comment>
<comment type="subcellular location">
    <subcellularLocation>
        <location evidence="2">Cytoplasm</location>
    </subcellularLocation>
</comment>
<comment type="miscellaneous">
    <text evidence="1">Several mechanisms have been proposed based on complexes formed with substrate analogs. After activation by the glycine radical, the cysteine radical, Cys-413, can abstract hydrogen atoms from the other active site cysteine, Cys-412, and from coenzyme A, and it can also transfer hydrogen atoms to product radicals. The other active site cysteine can attack the central carbonyl of pyruvate and covalently bind the product acetyl group.</text>
</comment>
<comment type="similarity">
    <text evidence="5">Belongs to the glycyl radical enzyme (GRE) family. PFL subfamily.</text>
</comment>
<name>PFLB_STAEQ</name>
<reference key="1">
    <citation type="journal article" date="2005" name="J. Bacteriol.">
        <title>Insights on evolution of virulence and resistance from the complete genome analysis of an early methicillin-resistant Staphylococcus aureus strain and a biofilm-producing methicillin-resistant Staphylococcus epidermidis strain.</title>
        <authorList>
            <person name="Gill S.R."/>
            <person name="Fouts D.E."/>
            <person name="Archer G.L."/>
            <person name="Mongodin E.F."/>
            <person name="DeBoy R.T."/>
            <person name="Ravel J."/>
            <person name="Paulsen I.T."/>
            <person name="Kolonay J.F."/>
            <person name="Brinkac L.M."/>
            <person name="Beanan M.J."/>
            <person name="Dodson R.J."/>
            <person name="Daugherty S.C."/>
            <person name="Madupu R."/>
            <person name="Angiuoli S.V."/>
            <person name="Durkin A.S."/>
            <person name="Haft D.H."/>
            <person name="Vamathevan J.J."/>
            <person name="Khouri H."/>
            <person name="Utterback T.R."/>
            <person name="Lee C."/>
            <person name="Dimitrov G."/>
            <person name="Jiang L."/>
            <person name="Qin H."/>
            <person name="Weidman J."/>
            <person name="Tran K."/>
            <person name="Kang K.H."/>
            <person name="Hance I.R."/>
            <person name="Nelson K.E."/>
            <person name="Fraser C.M."/>
        </authorList>
    </citation>
    <scope>NUCLEOTIDE SEQUENCE [LARGE SCALE GENOMIC DNA]</scope>
    <source>
        <strain>ATCC 35984 / DSM 28319 / BCRC 17069 / CCUG 31568 / BM 3577 / RP62A</strain>
    </source>
</reference>
<evidence type="ECO:0000250" key="1">
    <source>
        <dbReference type="UniProtKB" id="P09373"/>
    </source>
</evidence>
<evidence type="ECO:0000250" key="2">
    <source>
        <dbReference type="UniProtKB" id="Q5HJF4"/>
    </source>
</evidence>
<evidence type="ECO:0000255" key="3">
    <source>
        <dbReference type="PROSITE-ProRule" id="PRU00493"/>
    </source>
</evidence>
<evidence type="ECO:0000255" key="4">
    <source>
        <dbReference type="PROSITE-ProRule" id="PRU00887"/>
    </source>
</evidence>
<evidence type="ECO:0000305" key="5"/>